<name>MCSB_BACVZ</name>
<evidence type="ECO:0000255" key="1">
    <source>
        <dbReference type="HAMAP-Rule" id="MF_00602"/>
    </source>
</evidence>
<keyword id="KW-0021">Allosteric enzyme</keyword>
<keyword id="KW-0067">ATP-binding</keyword>
<keyword id="KW-0418">Kinase</keyword>
<keyword id="KW-0547">Nucleotide-binding</keyword>
<keyword id="KW-0808">Transferase</keyword>
<organism>
    <name type="scientific">Bacillus velezensis (strain DSM 23117 / BGSC 10A6 / LMG 26770 / FZB42)</name>
    <name type="common">Bacillus amyloliquefaciens subsp. plantarum</name>
    <dbReference type="NCBI Taxonomy" id="326423"/>
    <lineage>
        <taxon>Bacteria</taxon>
        <taxon>Bacillati</taxon>
        <taxon>Bacillota</taxon>
        <taxon>Bacilli</taxon>
        <taxon>Bacillales</taxon>
        <taxon>Bacillaceae</taxon>
        <taxon>Bacillus</taxon>
        <taxon>Bacillus amyloliquefaciens group</taxon>
    </lineage>
</organism>
<gene>
    <name evidence="1" type="primary">mcsB</name>
    <name type="ordered locus">RBAM_001100</name>
</gene>
<reference key="1">
    <citation type="journal article" date="2007" name="Nat. Biotechnol.">
        <title>Comparative analysis of the complete genome sequence of the plant growth-promoting bacterium Bacillus amyloliquefaciens FZB42.</title>
        <authorList>
            <person name="Chen X.H."/>
            <person name="Koumoutsi A."/>
            <person name="Scholz R."/>
            <person name="Eisenreich A."/>
            <person name="Schneider K."/>
            <person name="Heinemeyer I."/>
            <person name="Morgenstern B."/>
            <person name="Voss B."/>
            <person name="Hess W.R."/>
            <person name="Reva O."/>
            <person name="Junge H."/>
            <person name="Voigt B."/>
            <person name="Jungblut P.R."/>
            <person name="Vater J."/>
            <person name="Suessmuth R."/>
            <person name="Liesegang H."/>
            <person name="Strittmatter A."/>
            <person name="Gottschalk G."/>
            <person name="Borriss R."/>
        </authorList>
    </citation>
    <scope>NUCLEOTIDE SEQUENCE [LARGE SCALE GENOMIC DNA]</scope>
    <source>
        <strain>DSM 23117 / BGSC 10A6 / LMG 26770 / FZB42</strain>
    </source>
</reference>
<comment type="function">
    <text evidence="1">Catalyzes the specific phosphorylation of arginine residues in a large number of proteins. Is part of the bacterial stress response system. Protein arginine phosphorylation has a physiologically important role and is involved in the regulation of many critical cellular processes, such as protein homeostasis, motility, competence, and stringent and stress responses, by regulating gene expression and protein activity.</text>
</comment>
<comment type="catalytic activity">
    <reaction evidence="1">
        <text>L-arginyl-[protein] + ATP = N(omega)-phospho-L-arginyl-[protein] + ADP + H(+)</text>
        <dbReference type="Rhea" id="RHEA:43384"/>
        <dbReference type="Rhea" id="RHEA-COMP:10532"/>
        <dbReference type="Rhea" id="RHEA-COMP:10533"/>
        <dbReference type="ChEBI" id="CHEBI:15378"/>
        <dbReference type="ChEBI" id="CHEBI:29965"/>
        <dbReference type="ChEBI" id="CHEBI:30616"/>
        <dbReference type="ChEBI" id="CHEBI:83226"/>
        <dbReference type="ChEBI" id="CHEBI:456216"/>
        <dbReference type="EC" id="2.7.14.1"/>
    </reaction>
</comment>
<comment type="activity regulation">
    <text evidence="1">Appears to be allosterically activated by the binding of pArg-containing polypeptides to the pArg-binding pocket localized in the C-terminal domain of McsB.</text>
</comment>
<comment type="similarity">
    <text evidence="1">Belongs to the ATP:guanido phosphotransferase family.</text>
</comment>
<proteinExistence type="inferred from homology"/>
<protein>
    <recommendedName>
        <fullName evidence="1">Protein-arginine kinase</fullName>
        <ecNumber evidence="1">2.7.14.1</ecNumber>
    </recommendedName>
</protein>
<feature type="chain" id="PRO_1000025868" description="Protein-arginine kinase">
    <location>
        <begin position="1"/>
        <end position="363"/>
    </location>
</feature>
<feature type="domain" description="Phosphagen kinase C-terminal" evidence="1">
    <location>
        <begin position="24"/>
        <end position="254"/>
    </location>
</feature>
<feature type="short sequence motif" description="RDXXRA motif of the pArg binding pocket involved in allosteric regulation" evidence="1">
    <location>
        <begin position="337"/>
        <end position="342"/>
    </location>
</feature>
<feature type="binding site" evidence="1">
    <location>
        <begin position="27"/>
        <end position="31"/>
    </location>
    <ligand>
        <name>ATP</name>
        <dbReference type="ChEBI" id="CHEBI:30616"/>
    </ligand>
</feature>
<feature type="binding site" evidence="1">
    <location>
        <position position="92"/>
    </location>
    <ligand>
        <name>ATP</name>
        <dbReference type="ChEBI" id="CHEBI:30616"/>
    </ligand>
</feature>
<feature type="binding site" evidence="1">
    <location>
        <position position="125"/>
    </location>
    <ligand>
        <name>ATP</name>
        <dbReference type="ChEBI" id="CHEBI:30616"/>
    </ligand>
</feature>
<feature type="binding site" evidence="1">
    <location>
        <begin position="176"/>
        <end position="180"/>
    </location>
    <ligand>
        <name>ATP</name>
        <dbReference type="ChEBI" id="CHEBI:30616"/>
    </ligand>
</feature>
<feature type="binding site" evidence="1">
    <location>
        <begin position="207"/>
        <end position="212"/>
    </location>
    <ligand>
        <name>ATP</name>
        <dbReference type="ChEBI" id="CHEBI:30616"/>
    </ligand>
</feature>
<dbReference type="EC" id="2.7.14.1" evidence="1"/>
<dbReference type="EMBL" id="CP000560">
    <property type="protein sequence ID" value="ABS72533.1"/>
    <property type="molecule type" value="Genomic_DNA"/>
</dbReference>
<dbReference type="RefSeq" id="WP_003156398.1">
    <property type="nucleotide sequence ID" value="NC_009725.2"/>
</dbReference>
<dbReference type="SMR" id="A7Z0K7"/>
<dbReference type="GeneID" id="93079249"/>
<dbReference type="KEGG" id="bay:RBAM_001100"/>
<dbReference type="HOGENOM" id="CLU_066591_1_0_9"/>
<dbReference type="Proteomes" id="UP000001120">
    <property type="component" value="Chromosome"/>
</dbReference>
<dbReference type="GO" id="GO:0005615">
    <property type="term" value="C:extracellular space"/>
    <property type="evidence" value="ECO:0007669"/>
    <property type="project" value="TreeGrafter"/>
</dbReference>
<dbReference type="GO" id="GO:0005524">
    <property type="term" value="F:ATP binding"/>
    <property type="evidence" value="ECO:0007669"/>
    <property type="project" value="UniProtKB-KW"/>
</dbReference>
<dbReference type="GO" id="GO:0004111">
    <property type="term" value="F:creatine kinase activity"/>
    <property type="evidence" value="ECO:0007669"/>
    <property type="project" value="InterPro"/>
</dbReference>
<dbReference type="GO" id="GO:0004672">
    <property type="term" value="F:protein kinase activity"/>
    <property type="evidence" value="ECO:0007669"/>
    <property type="project" value="UniProtKB-UniRule"/>
</dbReference>
<dbReference type="GO" id="GO:0046314">
    <property type="term" value="P:phosphocreatine biosynthetic process"/>
    <property type="evidence" value="ECO:0007669"/>
    <property type="project" value="InterPro"/>
</dbReference>
<dbReference type="CDD" id="cd07930">
    <property type="entry name" value="bacterial_phosphagen_kinase"/>
    <property type="match status" value="1"/>
</dbReference>
<dbReference type="FunFam" id="3.30.590.10:FF:000007">
    <property type="entry name" value="Protein-arginine kinase"/>
    <property type="match status" value="1"/>
</dbReference>
<dbReference type="Gene3D" id="3.30.590.10">
    <property type="entry name" value="Glutamine synthetase/guanido kinase, catalytic domain"/>
    <property type="match status" value="1"/>
</dbReference>
<dbReference type="HAMAP" id="MF_00602">
    <property type="entry name" value="Prot_Arg_kinase"/>
    <property type="match status" value="1"/>
</dbReference>
<dbReference type="InterPro" id="IPR023660">
    <property type="entry name" value="Arg_Kinase"/>
</dbReference>
<dbReference type="InterPro" id="IPR000749">
    <property type="entry name" value="ATP-guanido_PTrfase"/>
</dbReference>
<dbReference type="InterPro" id="IPR022415">
    <property type="entry name" value="ATP-guanido_PTrfase_AS"/>
</dbReference>
<dbReference type="InterPro" id="IPR022414">
    <property type="entry name" value="ATP-guanido_PTrfase_cat"/>
</dbReference>
<dbReference type="InterPro" id="IPR014746">
    <property type="entry name" value="Gln_synth/guanido_kin_cat_dom"/>
</dbReference>
<dbReference type="NCBIfam" id="NF002194">
    <property type="entry name" value="PRK01059.1-4"/>
    <property type="match status" value="1"/>
</dbReference>
<dbReference type="NCBIfam" id="NF002195">
    <property type="entry name" value="PRK01059.1-5"/>
    <property type="match status" value="1"/>
</dbReference>
<dbReference type="PANTHER" id="PTHR11547:SF38">
    <property type="entry name" value="ARGININE KINASE 1-RELATED"/>
    <property type="match status" value="1"/>
</dbReference>
<dbReference type="PANTHER" id="PTHR11547">
    <property type="entry name" value="ARGININE OR CREATINE KINASE"/>
    <property type="match status" value="1"/>
</dbReference>
<dbReference type="Pfam" id="PF00217">
    <property type="entry name" value="ATP-gua_Ptrans"/>
    <property type="match status" value="1"/>
</dbReference>
<dbReference type="SUPFAM" id="SSF55931">
    <property type="entry name" value="Glutamine synthetase/guanido kinase"/>
    <property type="match status" value="1"/>
</dbReference>
<dbReference type="PROSITE" id="PS00112">
    <property type="entry name" value="PHOSPHAGEN_KINASE"/>
    <property type="match status" value="1"/>
</dbReference>
<dbReference type="PROSITE" id="PS51510">
    <property type="entry name" value="PHOSPHAGEN_KINASE_C"/>
    <property type="match status" value="1"/>
</dbReference>
<sequence length="363" mass="40965">MSLKHFIQDALSNWMKQKGPESDIVLSSRIRLARNFENIKFPARYTNEEASSIIQQFEDHFSGKELPDIGQFHLIRMSEAQPLEKRVLMEKHLISPNLTESPFGGCLLSENEEVSIMLNEEDHIRIQCLFPGFQLLNAIKAANQVDDWIEEKVDYAFGEKRGYLTSCPTNVGTGLRASVMMHLPGLVLTRQMNRIIPAINQLGLVVRGIYGEGSEALGNIFQISNQITLGKSEQDIVDDLNSVAAQLIEQERSAREALYQTSKIELEDRVFRSYGVLSNCRMIESKETAKCLSDVRLGIDLGIIKGLSSNILNELMILTQPGFLQQYSGGALRPNERDARRAALIRERLHLEMSANRQEDDSI</sequence>
<accession>A7Z0K7</accession>